<evidence type="ECO:0000250" key="1"/>
<evidence type="ECO:0000255" key="2"/>
<evidence type="ECO:0000305" key="3"/>
<feature type="chain" id="PRO_0000125500" description="Protein PR73">
    <location>
        <begin position="1"/>
        <end position="320"/>
    </location>
</feature>
<feature type="topological domain" description="Cytoplasmic" evidence="2">
    <location>
        <begin position="1"/>
        <end position="44"/>
    </location>
</feature>
<feature type="transmembrane region" description="Helical" evidence="2">
    <location>
        <begin position="45"/>
        <end position="65"/>
    </location>
</feature>
<feature type="topological domain" description="Extracellular" evidence="2">
    <location>
        <begin position="66"/>
        <end position="319"/>
    </location>
</feature>
<feature type="glycosylation site" description="N-linked (GlcNAc...) asparagine; by host" evidence="2">
    <location>
        <position position="79"/>
    </location>
</feature>
<feature type="glycosylation site" description="N-linked (GlcNAc...) asparagine; by host" evidence="2">
    <location>
        <position position="89"/>
    </location>
</feature>
<feature type="glycosylation site" description="N-linked (GlcNAc...) asparagine; by host" evidence="2">
    <location>
        <position position="93"/>
    </location>
</feature>
<feature type="glycosylation site" description="N-linked (GlcNAc...) asparagine; by host" evidence="2">
    <location>
        <position position="131"/>
    </location>
</feature>
<feature type="glycosylation site" description="N-linked (GlcNAc...) asparagine; by host" evidence="2">
    <location>
        <position position="146"/>
    </location>
</feature>
<name>PR73_MMTVB</name>
<accession>P10260</accession>
<reference key="1">
    <citation type="journal article" date="1987" name="J. Virol.">
        <title>Complete nucleotide sequence of a milk-transmitted mouse mammary tumor virus: two frameshift suppression events are required for translation of gag and pol.</title>
        <authorList>
            <person name="Moore R."/>
            <person name="Dixon M."/>
            <person name="Smith R."/>
            <person name="Peters G."/>
            <person name="Dickson C."/>
        </authorList>
    </citation>
    <scope>NUCLEOTIDE SEQUENCE [GENOMIC RNA]</scope>
</reference>
<organism>
    <name type="scientific">Mouse mammary tumor virus (strain BR6)</name>
    <name type="common">MMTV</name>
    <dbReference type="NCBI Taxonomy" id="11758"/>
    <lineage>
        <taxon>Viruses</taxon>
        <taxon>Riboviria</taxon>
        <taxon>Pararnavirae</taxon>
        <taxon>Artverviricota</taxon>
        <taxon>Revtraviricetes</taxon>
        <taxon>Ortervirales</taxon>
        <taxon>Retroviridae</taxon>
        <taxon>Orthoretrovirinae</taxon>
        <taxon>Betaretrovirus</taxon>
        <taxon>Mouse mammary tumor virus</taxon>
    </lineage>
</organism>
<protein>
    <recommendedName>
        <fullName>Protein PR73</fullName>
    </recommendedName>
</protein>
<comment type="function">
    <text evidence="1">Superantigen.</text>
</comment>
<comment type="subcellular location">
    <subcellularLocation>
        <location evidence="3">Membrane</location>
        <topology evidence="3">Single-pass type II membrane protein</topology>
    </subcellularLocation>
</comment>
<comment type="miscellaneous">
    <text>This protein is coded in the long terminal repeat (LTR).</text>
</comment>
<comment type="similarity">
    <text evidence="3">Belongs to the mouse mammary tumor virus PR73 superantigen family.</text>
</comment>
<organismHost>
    <name type="scientific">Mus musculus</name>
    <name type="common">Mouse</name>
    <dbReference type="NCBI Taxonomy" id="10090"/>
</organismHost>
<dbReference type="EMBL" id="M15122">
    <property type="protein sequence ID" value="AAA46545.1"/>
    <property type="molecule type" value="Genomic_RNA"/>
</dbReference>
<dbReference type="PIR" id="E26795">
    <property type="entry name" value="E26795"/>
</dbReference>
<dbReference type="RefSeq" id="NP_056884.1">
    <property type="nucleotide sequence ID" value="NC_001503.1"/>
</dbReference>
<dbReference type="SMR" id="P10260"/>
<dbReference type="GeneID" id="1491863"/>
<dbReference type="KEGG" id="vg:1491863"/>
<dbReference type="Proteomes" id="UP000228400">
    <property type="component" value="Genome"/>
</dbReference>
<dbReference type="GO" id="GO:0016020">
    <property type="term" value="C:membrane"/>
    <property type="evidence" value="ECO:0007669"/>
    <property type="project" value="UniProtKB-SubCell"/>
</dbReference>
<dbReference type="InterPro" id="IPR001213">
    <property type="entry name" value="MMTV_SAg"/>
</dbReference>
<dbReference type="Pfam" id="PF01054">
    <property type="entry name" value="MMTV_SAg"/>
    <property type="match status" value="1"/>
</dbReference>
<keyword id="KW-0325">Glycoprotein</keyword>
<keyword id="KW-0472">Membrane</keyword>
<keyword id="KW-1185">Reference proteome</keyword>
<keyword id="KW-0735">Signal-anchor</keyword>
<keyword id="KW-0766">Superantigen</keyword>
<keyword id="KW-0812">Transmembrane</keyword>
<keyword id="KW-1133">Transmembrane helix</keyword>
<proteinExistence type="inferred from homology"/>
<sequence>MPRLQQKWLNSRECPTLRGEAAKGLFPTKDDPSAHKRMSPSDKDILILCCKLGIALLCLGLLGEVAVRARRALTLDSFNSSSVQDYNLNDSENSTFLLRQGPQPTSSYKPHQPCPSEIEIRMLAKNYIFTNKTNPIGRLLVTMLRNESLPFSTIFTQIQRLEMGIENRKRHSTSVEEQVQGLRASGLEVKRGKRSALVKIGDRWWQPGTYRGPYIYRPTDAPLPYTGRYDLNFDRWVTVNGYKVLYRSLSFRERLARARPPWCMLTQEEKNDMKQQVHDYIYLGTGMSSIWGKIFHTKERTVAALIEHYSAKTYGMSYYD</sequence>